<keyword id="KW-0997">Cell inner membrane</keyword>
<keyword id="KW-1003">Cell membrane</keyword>
<keyword id="KW-0441">Lipid A biosynthesis</keyword>
<keyword id="KW-0444">Lipid biosynthesis</keyword>
<keyword id="KW-0443">Lipid metabolism</keyword>
<keyword id="KW-0448">Lipopolysaccharide biosynthesis</keyword>
<keyword id="KW-0472">Membrane</keyword>
<keyword id="KW-0812">Transmembrane</keyword>
<keyword id="KW-1133">Transmembrane helix</keyword>
<keyword id="KW-0813">Transport</keyword>
<sequence length="114" mass="12942">MNSYLLLLMVSLLTCIGQLCQKQAAQCWEQPQARRLNLTLRWLAIAVVSLGLGMLLWLRLLQQLPLSVAYPMLSFNFVLVTLAAQLFYGEKATLRHWLGVAAIIFGILLMSWHL</sequence>
<comment type="function">
    <text evidence="1">Translocates 4-amino-4-deoxy-L-arabinose-phosphoundecaprenol (alpha-L-Ara4N-phosphoundecaprenol) from the cytoplasmic to the periplasmic side of the inner membrane.</text>
</comment>
<comment type="pathway">
    <text evidence="1">Bacterial outer membrane biogenesis; lipopolysaccharide biosynthesis.</text>
</comment>
<comment type="subunit">
    <text evidence="1">Heterodimer of ArnE and ArnF.</text>
</comment>
<comment type="subcellular location">
    <subcellularLocation>
        <location evidence="1">Cell inner membrane</location>
        <topology evidence="1">Multi-pass membrane protein</topology>
    </subcellularLocation>
</comment>
<comment type="similarity">
    <text evidence="1">Belongs to the ArnE family.</text>
</comment>
<gene>
    <name evidence="1" type="primary">arnE</name>
    <name type="ordered locus">YpsIP31758_1730</name>
</gene>
<proteinExistence type="inferred from homology"/>
<feature type="chain" id="PRO_0000383019" description="Probable 4-amino-4-deoxy-L-arabinose-phosphoundecaprenol flippase subunit ArnE">
    <location>
        <begin position="1"/>
        <end position="114"/>
    </location>
</feature>
<feature type="transmembrane region" description="Helical" evidence="1">
    <location>
        <begin position="38"/>
        <end position="58"/>
    </location>
</feature>
<feature type="transmembrane region" description="Helical" evidence="1">
    <location>
        <begin position="64"/>
        <end position="84"/>
    </location>
</feature>
<feature type="transmembrane region" description="Helical" evidence="1">
    <location>
        <begin position="94"/>
        <end position="114"/>
    </location>
</feature>
<feature type="domain" description="EamA" evidence="1">
    <location>
        <begin position="43"/>
        <end position="112"/>
    </location>
</feature>
<protein>
    <recommendedName>
        <fullName evidence="1">Probable 4-amino-4-deoxy-L-arabinose-phosphoundecaprenol flippase subunit ArnE</fullName>
        <shortName evidence="1">L-Ara4N-phosphoundecaprenol flippase subunit ArnE</shortName>
    </recommendedName>
    <alternativeName>
        <fullName evidence="1">Undecaprenyl phosphate-aminoarabinose flippase subunit ArnE</fullName>
    </alternativeName>
</protein>
<name>ARNE_YERP3</name>
<reference key="1">
    <citation type="journal article" date="2007" name="PLoS Genet.">
        <title>The complete genome sequence of Yersinia pseudotuberculosis IP31758, the causative agent of Far East scarlet-like fever.</title>
        <authorList>
            <person name="Eppinger M."/>
            <person name="Rosovitz M.J."/>
            <person name="Fricke W.F."/>
            <person name="Rasko D.A."/>
            <person name="Kokorina G."/>
            <person name="Fayolle C."/>
            <person name="Lindler L.E."/>
            <person name="Carniel E."/>
            <person name="Ravel J."/>
        </authorList>
    </citation>
    <scope>NUCLEOTIDE SEQUENCE [LARGE SCALE GENOMIC DNA]</scope>
    <source>
        <strain>IP 31758</strain>
    </source>
</reference>
<evidence type="ECO:0000255" key="1">
    <source>
        <dbReference type="HAMAP-Rule" id="MF_01869"/>
    </source>
</evidence>
<accession>A7FHH7</accession>
<organism>
    <name type="scientific">Yersinia pseudotuberculosis serotype O:1b (strain IP 31758)</name>
    <dbReference type="NCBI Taxonomy" id="349747"/>
    <lineage>
        <taxon>Bacteria</taxon>
        <taxon>Pseudomonadati</taxon>
        <taxon>Pseudomonadota</taxon>
        <taxon>Gammaproteobacteria</taxon>
        <taxon>Enterobacterales</taxon>
        <taxon>Yersiniaceae</taxon>
        <taxon>Yersinia</taxon>
    </lineage>
</organism>
<dbReference type="EMBL" id="CP000720">
    <property type="protein sequence ID" value="ABS46076.1"/>
    <property type="molecule type" value="Genomic_DNA"/>
</dbReference>
<dbReference type="RefSeq" id="WP_011192541.1">
    <property type="nucleotide sequence ID" value="NC_009708.1"/>
</dbReference>
<dbReference type="SMR" id="A7FHH7"/>
<dbReference type="GeneID" id="49785670"/>
<dbReference type="KEGG" id="ypi:YpsIP31758_1730"/>
<dbReference type="HOGENOM" id="CLU_131462_5_1_6"/>
<dbReference type="UniPathway" id="UPA00030"/>
<dbReference type="Proteomes" id="UP000002412">
    <property type="component" value="Chromosome"/>
</dbReference>
<dbReference type="GO" id="GO:0005886">
    <property type="term" value="C:plasma membrane"/>
    <property type="evidence" value="ECO:0007669"/>
    <property type="project" value="UniProtKB-SubCell"/>
</dbReference>
<dbReference type="GO" id="GO:1901505">
    <property type="term" value="F:carbohydrate derivative transmembrane transporter activity"/>
    <property type="evidence" value="ECO:0007669"/>
    <property type="project" value="InterPro"/>
</dbReference>
<dbReference type="GO" id="GO:0009245">
    <property type="term" value="P:lipid A biosynthetic process"/>
    <property type="evidence" value="ECO:0007669"/>
    <property type="project" value="UniProtKB-UniRule"/>
</dbReference>
<dbReference type="GO" id="GO:0009103">
    <property type="term" value="P:lipopolysaccharide biosynthetic process"/>
    <property type="evidence" value="ECO:0007669"/>
    <property type="project" value="UniProtKB-UniRule"/>
</dbReference>
<dbReference type="FunFam" id="1.10.3730.20:FF:000002">
    <property type="entry name" value="Probable 4-amino-4-deoxy-L-arabinose-phosphoundecaprenol flippase subunit ArnE"/>
    <property type="match status" value="1"/>
</dbReference>
<dbReference type="Gene3D" id="1.10.3730.20">
    <property type="match status" value="1"/>
</dbReference>
<dbReference type="HAMAP" id="MF_01869">
    <property type="entry name" value="Flippase_ArnE"/>
    <property type="match status" value="1"/>
</dbReference>
<dbReference type="InterPro" id="IPR000620">
    <property type="entry name" value="EamA_dom"/>
</dbReference>
<dbReference type="InterPro" id="IPR022883">
    <property type="entry name" value="Flippase_ArnE"/>
</dbReference>
<dbReference type="InterPro" id="IPR000390">
    <property type="entry name" value="Small_drug/metabolite_transptr"/>
</dbReference>
<dbReference type="NCBIfam" id="NF011625">
    <property type="entry name" value="PRK15051.1"/>
    <property type="match status" value="1"/>
</dbReference>
<dbReference type="PANTHER" id="PTHR30561:SF23">
    <property type="entry name" value="4-AMINO-4-DEOXY-L-ARABINOSE-PHOSPHOUNDECAPRENOL FLIPPASE SUBUNIT ARNE-RELATED"/>
    <property type="match status" value="1"/>
</dbReference>
<dbReference type="PANTHER" id="PTHR30561">
    <property type="entry name" value="SMR FAMILY PROTON-DEPENDENT DRUG EFFLUX TRANSPORTER SUGE"/>
    <property type="match status" value="1"/>
</dbReference>
<dbReference type="Pfam" id="PF00892">
    <property type="entry name" value="EamA"/>
    <property type="match status" value="1"/>
</dbReference>
<dbReference type="SUPFAM" id="SSF103481">
    <property type="entry name" value="Multidrug resistance efflux transporter EmrE"/>
    <property type="match status" value="1"/>
</dbReference>